<dbReference type="EMBL" id="AE004437">
    <property type="protein sequence ID" value="AAG18728.1"/>
    <property type="molecule type" value="Genomic_DNA"/>
</dbReference>
<dbReference type="PIR" id="D84170">
    <property type="entry name" value="D84170"/>
</dbReference>
<dbReference type="RefSeq" id="WP_010902023.1">
    <property type="nucleotide sequence ID" value="NC_002607.1"/>
</dbReference>
<dbReference type="SMR" id="Q9HSS4"/>
<dbReference type="FunCoup" id="Q9HSS4">
    <property type="interactions" value="115"/>
</dbReference>
<dbReference type="STRING" id="64091.VNG_0099G"/>
<dbReference type="PaxDb" id="64091-VNG_0099G"/>
<dbReference type="KEGG" id="hal:VNG_0099G"/>
<dbReference type="PATRIC" id="fig|64091.14.peg.64"/>
<dbReference type="HOGENOM" id="CLU_084051_0_2_2"/>
<dbReference type="InParanoid" id="Q9HSS4"/>
<dbReference type="OrthoDB" id="30538at2157"/>
<dbReference type="PhylomeDB" id="Q9HSS4"/>
<dbReference type="Proteomes" id="UP000000554">
    <property type="component" value="Chromosome"/>
</dbReference>
<dbReference type="GO" id="GO:0022625">
    <property type="term" value="C:cytosolic large ribosomal subunit"/>
    <property type="evidence" value="ECO:0000318"/>
    <property type="project" value="GO_Central"/>
</dbReference>
<dbReference type="GO" id="GO:0003735">
    <property type="term" value="F:structural constituent of ribosome"/>
    <property type="evidence" value="ECO:0000318"/>
    <property type="project" value="GO_Central"/>
</dbReference>
<dbReference type="GO" id="GO:0006412">
    <property type="term" value="P:translation"/>
    <property type="evidence" value="ECO:0000318"/>
    <property type="project" value="GO_Central"/>
</dbReference>
<dbReference type="FunFam" id="3.90.1170.10:FF:000008">
    <property type="entry name" value="50S ribosomal protein L10e"/>
    <property type="match status" value="1"/>
</dbReference>
<dbReference type="Gene3D" id="3.90.1170.10">
    <property type="entry name" value="Ribosomal protein L10e/L16"/>
    <property type="match status" value="1"/>
</dbReference>
<dbReference type="HAMAP" id="MF_00448">
    <property type="entry name" value="Ribosomal_uL16_arch"/>
    <property type="match status" value="1"/>
</dbReference>
<dbReference type="InterPro" id="IPR047873">
    <property type="entry name" value="Ribosomal_uL16"/>
</dbReference>
<dbReference type="InterPro" id="IPR022981">
    <property type="entry name" value="Ribosomal_uL16_arc"/>
</dbReference>
<dbReference type="InterPro" id="IPR018255">
    <property type="entry name" value="Ribosomal_uL16_CS_euk_arc"/>
</dbReference>
<dbReference type="InterPro" id="IPR001197">
    <property type="entry name" value="Ribosomal_uL16_euk_arch"/>
</dbReference>
<dbReference type="InterPro" id="IPR036920">
    <property type="entry name" value="Ribosomal_uL16_sf"/>
</dbReference>
<dbReference type="NCBIfam" id="NF003239">
    <property type="entry name" value="PRK04199.1-4"/>
    <property type="match status" value="1"/>
</dbReference>
<dbReference type="NCBIfam" id="NF003241">
    <property type="entry name" value="PRK04199.1-6"/>
    <property type="match status" value="1"/>
</dbReference>
<dbReference type="PANTHER" id="PTHR11726">
    <property type="entry name" value="60S RIBOSOMAL PROTEIN L10"/>
    <property type="match status" value="1"/>
</dbReference>
<dbReference type="Pfam" id="PF00252">
    <property type="entry name" value="Ribosomal_L16"/>
    <property type="match status" value="1"/>
</dbReference>
<dbReference type="PIRSF" id="PIRSF005590">
    <property type="entry name" value="Ribosomal_L10"/>
    <property type="match status" value="1"/>
</dbReference>
<dbReference type="SUPFAM" id="SSF54686">
    <property type="entry name" value="Ribosomal protein L16p/L10e"/>
    <property type="match status" value="1"/>
</dbReference>
<dbReference type="PROSITE" id="PS01257">
    <property type="entry name" value="RIBOSOMAL_L10E"/>
    <property type="match status" value="1"/>
</dbReference>
<name>RL10E_HALSA</name>
<keyword id="KW-1185">Reference proteome</keyword>
<keyword id="KW-0687">Ribonucleoprotein</keyword>
<keyword id="KW-0689">Ribosomal protein</keyword>
<organism>
    <name type="scientific">Halobacterium salinarum (strain ATCC 700922 / JCM 11081 / NRC-1)</name>
    <name type="common">Halobacterium halobium</name>
    <dbReference type="NCBI Taxonomy" id="64091"/>
    <lineage>
        <taxon>Archaea</taxon>
        <taxon>Methanobacteriati</taxon>
        <taxon>Methanobacteriota</taxon>
        <taxon>Stenosarchaea group</taxon>
        <taxon>Halobacteria</taxon>
        <taxon>Halobacteriales</taxon>
        <taxon>Halobacteriaceae</taxon>
        <taxon>Halobacterium</taxon>
        <taxon>Halobacterium salinarum NRC-34001</taxon>
    </lineage>
</organism>
<evidence type="ECO:0000255" key="1">
    <source>
        <dbReference type="HAMAP-Rule" id="MF_00448"/>
    </source>
</evidence>
<evidence type="ECO:0000305" key="2"/>
<proteinExistence type="inferred from homology"/>
<sequence>MSEKPASMYRKIDKPSYTRRDYVTGIPGSKIAQHKMGDLQADADDYPVQISLVPQEECQLRHGSLEAARLSANRHLIKELGEGNYKMQLRKFPHQIIRENKQATGAGADRVSDGMRQAFGVPVGTAARIQPGDQLFTAYCEVEQAAAVKEAFRRAYNKITPPCKINVERGETLLVR</sequence>
<feature type="chain" id="PRO_0000147133" description="Large ribosomal subunit protein uL16">
    <location>
        <begin position="1"/>
        <end position="176"/>
    </location>
</feature>
<comment type="similarity">
    <text evidence="1">Belongs to the universal ribosomal protein uL16 family.</text>
</comment>
<accession>Q9HSS4</accession>
<protein>
    <recommendedName>
        <fullName evidence="1">Large ribosomal subunit protein uL16</fullName>
    </recommendedName>
    <alternativeName>
        <fullName evidence="2">50S ribosomal protein L10e</fullName>
    </alternativeName>
</protein>
<reference key="1">
    <citation type="journal article" date="2000" name="Proc. Natl. Acad. Sci. U.S.A.">
        <title>Genome sequence of Halobacterium species NRC-1.</title>
        <authorList>
            <person name="Ng W.V."/>
            <person name="Kennedy S.P."/>
            <person name="Mahairas G.G."/>
            <person name="Berquist B."/>
            <person name="Pan M."/>
            <person name="Shukla H.D."/>
            <person name="Lasky S.R."/>
            <person name="Baliga N.S."/>
            <person name="Thorsson V."/>
            <person name="Sbrogna J."/>
            <person name="Swartzell S."/>
            <person name="Weir D."/>
            <person name="Hall J."/>
            <person name="Dahl T.A."/>
            <person name="Welti R."/>
            <person name="Goo Y.A."/>
            <person name="Leithauser B."/>
            <person name="Keller K."/>
            <person name="Cruz R."/>
            <person name="Danson M.J."/>
            <person name="Hough D.W."/>
            <person name="Maddocks D.G."/>
            <person name="Jablonski P.E."/>
            <person name="Krebs M.P."/>
            <person name="Angevine C.M."/>
            <person name="Dale H."/>
            <person name="Isenbarger T.A."/>
            <person name="Peck R.F."/>
            <person name="Pohlschroder M."/>
            <person name="Spudich J.L."/>
            <person name="Jung K.-H."/>
            <person name="Alam M."/>
            <person name="Freitas T."/>
            <person name="Hou S."/>
            <person name="Daniels C.J."/>
            <person name="Dennis P.P."/>
            <person name="Omer A.D."/>
            <person name="Ebhardt H."/>
            <person name="Lowe T.M."/>
            <person name="Liang P."/>
            <person name="Riley M."/>
            <person name="Hood L."/>
            <person name="DasSarma S."/>
        </authorList>
    </citation>
    <scope>NUCLEOTIDE SEQUENCE [LARGE SCALE GENOMIC DNA]</scope>
    <source>
        <strain>ATCC 700922 / JCM 11081 / NRC-1</strain>
    </source>
</reference>
<gene>
    <name evidence="1" type="primary">rpl10e</name>
    <name type="ordered locus">VNG_0099G</name>
</gene>